<dbReference type="EMBL" id="FM178379">
    <property type="protein sequence ID" value="CAQ79668.1"/>
    <property type="molecule type" value="Genomic_DNA"/>
</dbReference>
<dbReference type="RefSeq" id="WP_012550543.1">
    <property type="nucleotide sequence ID" value="NC_011312.1"/>
</dbReference>
<dbReference type="SMR" id="B6EH86"/>
<dbReference type="KEGG" id="vsa:VSAL_I1983"/>
<dbReference type="eggNOG" id="COG1609">
    <property type="taxonomic scope" value="Bacteria"/>
</dbReference>
<dbReference type="HOGENOM" id="CLU_037628_6_2_6"/>
<dbReference type="UniPathway" id="UPA00488"/>
<dbReference type="Proteomes" id="UP000001730">
    <property type="component" value="Chromosome 1"/>
</dbReference>
<dbReference type="GO" id="GO:0003700">
    <property type="term" value="F:DNA-binding transcription factor activity"/>
    <property type="evidence" value="ECO:0007669"/>
    <property type="project" value="TreeGrafter"/>
</dbReference>
<dbReference type="GO" id="GO:0000976">
    <property type="term" value="F:transcription cis-regulatory region binding"/>
    <property type="evidence" value="ECO:0007669"/>
    <property type="project" value="TreeGrafter"/>
</dbReference>
<dbReference type="GO" id="GO:0045892">
    <property type="term" value="P:negative regulation of DNA-templated transcription"/>
    <property type="evidence" value="ECO:0007669"/>
    <property type="project" value="UniProtKB-UniRule"/>
</dbReference>
<dbReference type="GO" id="GO:0006164">
    <property type="term" value="P:purine nucleotide biosynthetic process"/>
    <property type="evidence" value="ECO:0007669"/>
    <property type="project" value="UniProtKB-UniPathway"/>
</dbReference>
<dbReference type="CDD" id="cd01392">
    <property type="entry name" value="HTH_LacI"/>
    <property type="match status" value="1"/>
</dbReference>
<dbReference type="CDD" id="cd06275">
    <property type="entry name" value="PBP1_PurR"/>
    <property type="match status" value="1"/>
</dbReference>
<dbReference type="FunFam" id="1.10.260.40:FF:000002">
    <property type="entry name" value="HTH-type transcriptional repressor PurR"/>
    <property type="match status" value="1"/>
</dbReference>
<dbReference type="Gene3D" id="3.40.50.2300">
    <property type="match status" value="2"/>
</dbReference>
<dbReference type="Gene3D" id="1.10.260.40">
    <property type="entry name" value="lambda repressor-like DNA-binding domains"/>
    <property type="match status" value="1"/>
</dbReference>
<dbReference type="HAMAP" id="MF_01277">
    <property type="entry name" value="HTH_type_PurR"/>
    <property type="match status" value="1"/>
</dbReference>
<dbReference type="InterPro" id="IPR000843">
    <property type="entry name" value="HTH_LacI"/>
</dbReference>
<dbReference type="InterPro" id="IPR046335">
    <property type="entry name" value="LacI/GalR-like_sensor"/>
</dbReference>
<dbReference type="InterPro" id="IPR010982">
    <property type="entry name" value="Lambda_DNA-bd_dom_sf"/>
</dbReference>
<dbReference type="InterPro" id="IPR028082">
    <property type="entry name" value="Peripla_BP_I"/>
</dbReference>
<dbReference type="InterPro" id="IPR023588">
    <property type="entry name" value="Tscrpt_reg_HTH_PurR"/>
</dbReference>
<dbReference type="NCBIfam" id="NF007979">
    <property type="entry name" value="PRK10703.1"/>
    <property type="match status" value="1"/>
</dbReference>
<dbReference type="PANTHER" id="PTHR30146:SF148">
    <property type="entry name" value="HTH-TYPE TRANSCRIPTIONAL REPRESSOR PURR-RELATED"/>
    <property type="match status" value="1"/>
</dbReference>
<dbReference type="PANTHER" id="PTHR30146">
    <property type="entry name" value="LACI-RELATED TRANSCRIPTIONAL REPRESSOR"/>
    <property type="match status" value="1"/>
</dbReference>
<dbReference type="Pfam" id="PF00356">
    <property type="entry name" value="LacI"/>
    <property type="match status" value="1"/>
</dbReference>
<dbReference type="Pfam" id="PF13377">
    <property type="entry name" value="Peripla_BP_3"/>
    <property type="match status" value="1"/>
</dbReference>
<dbReference type="PRINTS" id="PR00036">
    <property type="entry name" value="HTHLACI"/>
</dbReference>
<dbReference type="SMART" id="SM00354">
    <property type="entry name" value="HTH_LACI"/>
    <property type="match status" value="1"/>
</dbReference>
<dbReference type="SUPFAM" id="SSF47413">
    <property type="entry name" value="lambda repressor-like DNA-binding domains"/>
    <property type="match status" value="1"/>
</dbReference>
<dbReference type="SUPFAM" id="SSF53822">
    <property type="entry name" value="Periplasmic binding protein-like I"/>
    <property type="match status" value="1"/>
</dbReference>
<dbReference type="PROSITE" id="PS00356">
    <property type="entry name" value="HTH_LACI_1"/>
    <property type="match status" value="1"/>
</dbReference>
<dbReference type="PROSITE" id="PS50932">
    <property type="entry name" value="HTH_LACI_2"/>
    <property type="match status" value="1"/>
</dbReference>
<sequence length="333" mass="37706">MATIKDVAKLASVSTTTVSHVINKTRFVAEATQKRVWEAVEELNYAPSAVARSLKCNTTRTIGMLVTQSFNPFFAEMMHGVENYCYKQGYTLFMCNTEGDLDKQKHYLRMLAEKRVDGLLVMCSDLNEQLLAQLEKNTELPMVIMDWGPDSPHTDKIIDNSEEGGYLATKHLIENGHTKIGCVTGQLDKATCKERIHGFYRALSEANLTSNPDWIFEGDFECSSASKSVEKMLQMEDKPTALFCFNDIMALAAISKIQQTGLRVPEDISIIGYDNIELSAYFSPPLTTIHQPKRRVGKTAVEILLERIKDKHHERRIFEMHPEVVTRKSVHKL</sequence>
<accession>B6EH86</accession>
<gene>
    <name evidence="1" type="primary">purR</name>
    <name type="ordered locus">VSAL_I1983</name>
</gene>
<reference key="1">
    <citation type="journal article" date="2008" name="BMC Genomics">
        <title>The genome sequence of the fish pathogen Aliivibrio salmonicida strain LFI1238 shows extensive evidence of gene decay.</title>
        <authorList>
            <person name="Hjerde E."/>
            <person name="Lorentzen M.S."/>
            <person name="Holden M.T."/>
            <person name="Seeger K."/>
            <person name="Paulsen S."/>
            <person name="Bason N."/>
            <person name="Churcher C."/>
            <person name="Harris D."/>
            <person name="Norbertczak H."/>
            <person name="Quail M.A."/>
            <person name="Sanders S."/>
            <person name="Thurston S."/>
            <person name="Parkhill J."/>
            <person name="Willassen N.P."/>
            <person name="Thomson N.R."/>
        </authorList>
    </citation>
    <scope>NUCLEOTIDE SEQUENCE [LARGE SCALE GENOMIC DNA]</scope>
    <source>
        <strain>LFI1238</strain>
    </source>
</reference>
<proteinExistence type="inferred from homology"/>
<protein>
    <recommendedName>
        <fullName evidence="1">HTH-type transcriptional repressor PurR</fullName>
    </recommendedName>
    <alternativeName>
        <fullName evidence="1">Pur regulon repressor</fullName>
    </alternativeName>
    <alternativeName>
        <fullName evidence="1">Purine nucleotide synthesis repressor</fullName>
    </alternativeName>
</protein>
<evidence type="ECO:0000255" key="1">
    <source>
        <dbReference type="HAMAP-Rule" id="MF_01277"/>
    </source>
</evidence>
<comment type="function">
    <text evidence="1">Is the main repressor of the genes involved in the de novo synthesis of purine nucleotides, regulating purB, purC, purEK, purF, purHD, purL, purMN and guaBA expression. PurR is allosterically activated to bind its cognate DNA by binding the purine corepressors, hypoxanthine or guanine, thereby effecting transcription repression.</text>
</comment>
<comment type="pathway">
    <text>Purine metabolism; purine nucleotide biosynthesis [regulation].</text>
</comment>
<comment type="subunit">
    <text evidence="1">Homodimer.</text>
</comment>
<comment type="domain">
    <text evidence="1">Consists of two structural and functional domains: an N-terminal DNA-binding domain, approximately the first 60 residues, and a larger C-terminal domain, approximately 280 residues, which imparts the function of corepressor binding and oligomerization.</text>
</comment>
<keyword id="KW-0238">DNA-binding</keyword>
<keyword id="KW-0658">Purine biosynthesis</keyword>
<keyword id="KW-0678">Repressor</keyword>
<keyword id="KW-0804">Transcription</keyword>
<keyword id="KW-0805">Transcription regulation</keyword>
<name>PURR_ALISL</name>
<feature type="chain" id="PRO_1000140285" description="HTH-type transcriptional repressor PurR">
    <location>
        <begin position="1"/>
        <end position="333"/>
    </location>
</feature>
<feature type="domain" description="HTH lacI-type" evidence="1">
    <location>
        <begin position="2"/>
        <end position="56"/>
    </location>
</feature>
<feature type="DNA-binding region" description="H-T-H motif" evidence="1">
    <location>
        <begin position="4"/>
        <end position="23"/>
    </location>
</feature>
<feature type="DNA-binding region" evidence="1">
    <location>
        <begin position="48"/>
        <end position="56"/>
    </location>
</feature>
<feature type="binding site" evidence="1">
    <location>
        <position position="73"/>
    </location>
    <ligand>
        <name>hypoxanthine</name>
        <dbReference type="ChEBI" id="CHEBI:17368"/>
    </ligand>
</feature>
<feature type="binding site" evidence="1">
    <location>
        <position position="189"/>
    </location>
    <ligand>
        <name>hypoxanthine</name>
        <dbReference type="ChEBI" id="CHEBI:17368"/>
    </ligand>
</feature>
<feature type="binding site" evidence="1">
    <location>
        <position position="191"/>
    </location>
    <ligand>
        <name>hypoxanthine</name>
        <dbReference type="ChEBI" id="CHEBI:17368"/>
    </ligand>
</feature>
<feature type="binding site" evidence="1">
    <location>
        <position position="220"/>
    </location>
    <ligand>
        <name>hypoxanthine</name>
        <dbReference type="ChEBI" id="CHEBI:17368"/>
    </ligand>
</feature>
<feature type="binding site" evidence="1">
    <location>
        <position position="274"/>
    </location>
    <ligand>
        <name>hypoxanthine</name>
        <dbReference type="ChEBI" id="CHEBI:17368"/>
    </ligand>
</feature>
<organism>
    <name type="scientific">Aliivibrio salmonicida (strain LFI1238)</name>
    <name type="common">Vibrio salmonicida (strain LFI1238)</name>
    <dbReference type="NCBI Taxonomy" id="316275"/>
    <lineage>
        <taxon>Bacteria</taxon>
        <taxon>Pseudomonadati</taxon>
        <taxon>Pseudomonadota</taxon>
        <taxon>Gammaproteobacteria</taxon>
        <taxon>Vibrionales</taxon>
        <taxon>Vibrionaceae</taxon>
        <taxon>Aliivibrio</taxon>
    </lineage>
</organism>